<reference key="1">
    <citation type="journal article" date="1990" name="Nucleic Acids Res.">
        <title>Nucleotide and deduced amino acid sequences of the nominal nonstructural phosphoprotein of the ERA, PM and CVS-11 strains of rabies virus.</title>
        <authorList>
            <person name="Larson J.K."/>
            <person name="Wunner W.H."/>
        </authorList>
    </citation>
    <scope>NUCLEOTIDE SEQUENCE [GENOMIC RNA]</scope>
</reference>
<keyword id="KW-0024">Alternative initiation</keyword>
<keyword id="KW-0143">Chaperone</keyword>
<keyword id="KW-1176">Cytoplasmic inwards viral transport</keyword>
<keyword id="KW-1035">Host cytoplasm</keyword>
<keyword id="KW-1048">Host nucleus</keyword>
<keyword id="KW-0945">Host-virus interaction</keyword>
<keyword id="KW-1090">Inhibition of host innate immune response by virus</keyword>
<keyword id="KW-1114">Inhibition of host interferon signaling pathway by virus</keyword>
<keyword id="KW-1105">Inhibition of host STAT1 by virus</keyword>
<keyword id="KW-1106">Inhibition of host STAT2 by virus</keyword>
<keyword id="KW-1223">Inhibition of host TBK1 by virus</keyword>
<keyword id="KW-1225">Inhibition of host TLR pathway by virus</keyword>
<keyword id="KW-0922">Interferon antiviral system evasion</keyword>
<keyword id="KW-1177">Microtubular inwards viral transport</keyword>
<keyword id="KW-0597">Phosphoprotein</keyword>
<keyword id="KW-0899">Viral immunoevasion</keyword>
<keyword id="KW-0693">Viral RNA replication</keyword>
<keyword id="KW-0946">Virion</keyword>
<keyword id="KW-1160">Virus entry into host cell</keyword>
<organismHost>
    <name type="scientific">Homo sapiens</name>
    <name type="common">Human</name>
    <dbReference type="NCBI Taxonomy" id="9606"/>
</organismHost>
<organismHost>
    <name type="scientific">Mammalia</name>
    <dbReference type="NCBI Taxonomy" id="40674"/>
</organismHost>
<sequence>MSKIFVNPSAIRAGLADLEMAEETVDLINRNIEDNQAHLQGEPIEVDNLPEDMGRLHLDDGKSPNPGEMAKVGEGKYREDFQMDEGEDPSFLFQSYLENVGVQIVRQMRSGERFLKIWSQTVEEIISYVAVNFPNPPGKSSEDKSTQTTGRELKKETTPTPSQRESQSSKARMAAQTASGPPALEWSATNEKDDLSVEAEIAHQIAESFSKKYKFPSRSSGILLYNFEQLKMNLDDIVKEAKNVPGVTRLAHDGSKLPLRCVLGWVALANSKKFQLLVESDKLSKIMQDDLNRYTSC</sequence>
<evidence type="ECO:0000250" key="1"/>
<evidence type="ECO:0000250" key="2">
    <source>
        <dbReference type="UniProtKB" id="P16286"/>
    </source>
</evidence>
<evidence type="ECO:0000256" key="3">
    <source>
        <dbReference type="SAM" id="MobiDB-lite"/>
    </source>
</evidence>
<evidence type="ECO:0000305" key="4"/>
<dbReference type="EMBL" id="X55729">
    <property type="protein sequence ID" value="CAA39260.1"/>
    <property type="molecule type" value="Genomic_RNA"/>
</dbReference>
<dbReference type="PIR" id="S13708">
    <property type="entry name" value="S13708"/>
</dbReference>
<dbReference type="SMR" id="P69480"/>
<dbReference type="GO" id="GO:0043657">
    <property type="term" value="C:host cell"/>
    <property type="evidence" value="ECO:0007669"/>
    <property type="project" value="GOC"/>
</dbReference>
<dbReference type="GO" id="GO:0030430">
    <property type="term" value="C:host cell cytoplasm"/>
    <property type="evidence" value="ECO:0007669"/>
    <property type="project" value="UniProtKB-SubCell"/>
</dbReference>
<dbReference type="GO" id="GO:0042025">
    <property type="term" value="C:host cell nucleus"/>
    <property type="evidence" value="ECO:0007669"/>
    <property type="project" value="UniProtKB-SubCell"/>
</dbReference>
<dbReference type="GO" id="GO:0044423">
    <property type="term" value="C:virion component"/>
    <property type="evidence" value="ECO:0007669"/>
    <property type="project" value="UniProtKB-KW"/>
</dbReference>
<dbReference type="GO" id="GO:0003968">
    <property type="term" value="F:RNA-directed RNA polymerase activity"/>
    <property type="evidence" value="ECO:0007669"/>
    <property type="project" value="InterPro"/>
</dbReference>
<dbReference type="GO" id="GO:0075521">
    <property type="term" value="P:microtubule-dependent intracellular transport of viral material towards nucleus"/>
    <property type="evidence" value="ECO:0007669"/>
    <property type="project" value="UniProtKB-KW"/>
</dbReference>
<dbReference type="GO" id="GO:0046718">
    <property type="term" value="P:symbiont entry into host cell"/>
    <property type="evidence" value="ECO:0007669"/>
    <property type="project" value="UniProtKB-KW"/>
</dbReference>
<dbReference type="GO" id="GO:0039723">
    <property type="term" value="P:symbiont-mediated suppression of host cytoplasmic pattern recognition receptor signaling pathway via inhibition of TBK1 activity"/>
    <property type="evidence" value="ECO:0007669"/>
    <property type="project" value="UniProtKB-KW"/>
</dbReference>
<dbReference type="GO" id="GO:0039563">
    <property type="term" value="P:symbiont-mediated suppression of host JAK-STAT cascade via inhibition of STAT1 activity"/>
    <property type="evidence" value="ECO:0007669"/>
    <property type="project" value="UniProtKB-KW"/>
</dbReference>
<dbReference type="GO" id="GO:0039564">
    <property type="term" value="P:symbiont-mediated suppression of host JAK-STAT cascade via inhibition of STAT2 activity"/>
    <property type="evidence" value="ECO:0007669"/>
    <property type="project" value="UniProtKB-KW"/>
</dbReference>
<dbReference type="GO" id="GO:0039722">
    <property type="term" value="P:symbiont-mediated suppression of host toll-like receptor signaling pathway"/>
    <property type="evidence" value="ECO:0007669"/>
    <property type="project" value="UniProtKB-KW"/>
</dbReference>
<dbReference type="GO" id="GO:0039502">
    <property type="term" value="P:symbiont-mediated suppression of host type I interferon-mediated signaling pathway"/>
    <property type="evidence" value="ECO:0007669"/>
    <property type="project" value="UniProtKB-KW"/>
</dbReference>
<dbReference type="GO" id="GO:0019083">
    <property type="term" value="P:viral transcription"/>
    <property type="evidence" value="ECO:0007669"/>
    <property type="project" value="InterPro"/>
</dbReference>
<dbReference type="CDD" id="cd21032">
    <property type="entry name" value="RABV_P-protein-C_like"/>
    <property type="match status" value="1"/>
</dbReference>
<dbReference type="FunFam" id="1.20.120.820:FF:000001">
    <property type="entry name" value="Phosphoprotein"/>
    <property type="match status" value="1"/>
</dbReference>
<dbReference type="Gene3D" id="6.10.140.1560">
    <property type="match status" value="1"/>
</dbReference>
<dbReference type="Gene3D" id="1.20.120.820">
    <property type="entry name" value="Phosphoprotein, C-terminal domain"/>
    <property type="match status" value="1"/>
</dbReference>
<dbReference type="InterPro" id="IPR004259">
    <property type="entry name" value="PP_M1-like"/>
</dbReference>
<dbReference type="InterPro" id="IPR037199">
    <property type="entry name" value="PP_M1_C"/>
</dbReference>
<dbReference type="InterPro" id="IPR049506">
    <property type="entry name" value="RABV_P-like_C"/>
</dbReference>
<dbReference type="Pfam" id="PF03012">
    <property type="entry name" value="PP_M1"/>
    <property type="match status" value="1"/>
</dbReference>
<dbReference type="SUPFAM" id="SSF118173">
    <property type="entry name" value="Phosphoprotein M1, C-terminal domain"/>
    <property type="match status" value="1"/>
</dbReference>
<organism>
    <name type="scientific">Rabies virus (strain PM)</name>
    <name type="common">RABV</name>
    <dbReference type="NCBI Taxonomy" id="11297"/>
    <lineage>
        <taxon>Viruses</taxon>
        <taxon>Riboviria</taxon>
        <taxon>Orthornavirae</taxon>
        <taxon>Negarnaviricota</taxon>
        <taxon>Haploviricotina</taxon>
        <taxon>Monjiviricetes</taxon>
        <taxon>Mononegavirales</taxon>
        <taxon>Rhabdoviridae</taxon>
        <taxon>Alpharhabdovirinae</taxon>
        <taxon>Lyssavirus</taxon>
        <taxon>Lyssavirus rabies</taxon>
    </lineage>
</organism>
<proteinExistence type="inferred from homology"/>
<comment type="function">
    <text evidence="1 2">Non catalytic polymerase cofactor and regulatory protein that plays a role in viral transcription and replication. Stabilizes the RNA polymerase L to the N-RNA template and binds the soluble protein N, preventing it from encapsidating non-genomic RNA. Also inhibits host IFN-alpha and IFN-beta signaling by binding and retaining phosphorylated STAT1 in the cytoplasm or by inhibiting the DNA binding of STAT1 in the nucleus. Might be involved, through interaction with host dynein, in intracellular microtubule-dependent virus transport of incoming virus from the synapse toward the cell body (By similarity). Inhibits interferon induction pathways by interacting with host TBK1 and preventing the formation of dynamic cytoplasmic condensates that have liquid properties and that are essential for interferon production (By similarity).</text>
</comment>
<comment type="subunit">
    <molecule>Phosphoprotein</molecule>
    <text evidence="2">Homotrimer when phosphorylated. This trimer is stabilized by binding to the L protein. Binds soluble protein N, and ribonucleocapsid. Interacts with host DYNLL1 and DYNLL2; this interaction may play a role in intracellular microtubule-dependent virus transport of incoming virus. Interacts with host STAT1, STAT2 and PML. Interacts with host TBK1.</text>
</comment>
<comment type="subunit">
    <molecule>Isoform P3</molecule>
    <text evidence="1">Binds host PML.</text>
</comment>
<comment type="subcellular location">
    <molecule>Phosphoprotein</molecule>
    <subcellularLocation>
        <location>Virion</location>
    </subcellularLocation>
    <subcellularLocation>
        <location evidence="1">Host cytoplasm</location>
    </subcellularLocation>
</comment>
<comment type="subcellular location">
    <molecule>Isoform P2</molecule>
    <subcellularLocation>
        <location evidence="1">Host cytoplasm</location>
    </subcellularLocation>
</comment>
<comment type="subcellular location">
    <molecule>Isoform P3</molecule>
    <subcellularLocation>
        <location evidence="1">Host nucleus</location>
    </subcellularLocation>
</comment>
<comment type="subcellular location">
    <molecule>Isoform P4</molecule>
    <subcellularLocation>
        <location evidence="1">Host nucleus</location>
    </subcellularLocation>
</comment>
<comment type="subcellular location">
    <molecule>Isoform P5</molecule>
    <subcellularLocation>
        <location evidence="1">Host nucleus</location>
    </subcellularLocation>
</comment>
<comment type="alternative products">
    <event type="alternative initiation"/>
    <isoform>
        <id>P69480-1</id>
        <name>P</name>
        <sequence type="displayed"/>
    </isoform>
    <isoform>
        <id>P69480-2</id>
        <name>P2</name>
        <sequence type="described" ref="VSP_026879"/>
    </isoform>
    <isoform>
        <id>P69480-3</id>
        <name>P3</name>
        <sequence type="described" ref="VSP_026878"/>
    </isoform>
    <isoform>
        <id>P69480-4</id>
        <name>P4</name>
        <sequence type="described" ref="VSP_026877"/>
    </isoform>
    <isoform>
        <id>P69480-5</id>
        <name>P5</name>
        <sequence type="described" ref="VSP_026876"/>
    </isoform>
</comment>
<comment type="PTM">
    <text evidence="1">Phosphorylated by host PKC and by an unknown kinase.</text>
</comment>
<comment type="similarity">
    <text evidence="4">Belongs to the lyssavirus protein P family.</text>
</comment>
<feature type="chain" id="PRO_0000222830" description="Phosphoprotein">
    <location>
        <begin position="1"/>
        <end position="297"/>
    </location>
</feature>
<feature type="region of interest" description="Disordered" evidence="3">
    <location>
        <begin position="132"/>
        <end position="189"/>
    </location>
</feature>
<feature type="region of interest" description="DYNLL1 and DYNLL2 binding" evidence="1">
    <location>
        <begin position="138"/>
        <end position="172"/>
    </location>
</feature>
<feature type="short sequence motif" description="Nuclear export signal" evidence="1">
    <location>
        <begin position="49"/>
        <end position="58"/>
    </location>
</feature>
<feature type="short sequence motif" description="Nuclear localization signal" evidence="1">
    <location>
        <begin position="211"/>
        <end position="214"/>
    </location>
</feature>
<feature type="compositionally biased region" description="Basic and acidic residues" evidence="3">
    <location>
        <begin position="140"/>
        <end position="157"/>
    </location>
</feature>
<feature type="compositionally biased region" description="Polar residues" evidence="3">
    <location>
        <begin position="158"/>
        <end position="170"/>
    </location>
</feature>
<feature type="modified residue" description="Phosphoserine; by host" evidence="1">
    <location>
        <position position="63"/>
    </location>
</feature>
<feature type="modified residue" description="Phosphoserine; by host PKC" evidence="1">
    <location>
        <position position="162"/>
    </location>
</feature>
<feature type="modified residue" description="Phosphoserine; by host PKC" evidence="1">
    <location>
        <position position="210"/>
    </location>
</feature>
<feature type="modified residue" description="Phosphoserine; by host PKC" evidence="1">
    <location>
        <position position="271"/>
    </location>
</feature>
<feature type="splice variant" id="VSP_026876" description="In isoform P5." evidence="4">
    <location>
        <begin position="1"/>
        <end position="82"/>
    </location>
</feature>
<feature type="splice variant" id="VSP_026877" description="In isoform P4." evidence="4">
    <location>
        <begin position="1"/>
        <end position="68"/>
    </location>
</feature>
<feature type="splice variant" id="VSP_026878" description="In isoform P3." evidence="4">
    <location>
        <begin position="1"/>
        <end position="52"/>
    </location>
</feature>
<feature type="splice variant" id="VSP_026879" description="In isoform P2." evidence="4">
    <location>
        <begin position="1"/>
        <end position="19"/>
    </location>
</feature>
<name>PHOSP_RABVM</name>
<accession>P69480</accession>
<accession>P22559</accession>
<gene>
    <name type="primary">P</name>
</gene>
<protein>
    <recommendedName>
        <fullName>Phosphoprotein</fullName>
        <shortName>Protein P</shortName>
    </recommendedName>
    <alternativeName>
        <fullName>Protein M1</fullName>
    </alternativeName>
</protein>